<organism>
    <name type="scientific">Pongo abelii</name>
    <name type="common">Sumatran orangutan</name>
    <name type="synonym">Pongo pygmaeus abelii</name>
    <dbReference type="NCBI Taxonomy" id="9601"/>
    <lineage>
        <taxon>Eukaryota</taxon>
        <taxon>Metazoa</taxon>
        <taxon>Chordata</taxon>
        <taxon>Craniata</taxon>
        <taxon>Vertebrata</taxon>
        <taxon>Euteleostomi</taxon>
        <taxon>Mammalia</taxon>
        <taxon>Eutheria</taxon>
        <taxon>Euarchontoglires</taxon>
        <taxon>Primates</taxon>
        <taxon>Haplorrhini</taxon>
        <taxon>Catarrhini</taxon>
        <taxon>Hominidae</taxon>
        <taxon>Pongo</taxon>
    </lineage>
</organism>
<accession>Q5R8H5</accession>
<feature type="initiator methionine" description="Removed" evidence="2">
    <location>
        <position position="1"/>
    </location>
</feature>
<feature type="chain" id="PRO_0000260324" description="General transcription factor IIE subunit 1">
    <location>
        <begin position="2"/>
        <end position="439"/>
    </location>
</feature>
<feature type="domain" description="HTH TFE/IIEalpha-type" evidence="4">
    <location>
        <begin position="14"/>
        <end position="104"/>
    </location>
</feature>
<feature type="zinc finger region" description="C4-type" evidence="3">
    <location>
        <begin position="129"/>
        <end position="157"/>
    </location>
</feature>
<feature type="region of interest" description="Disordered" evidence="5">
    <location>
        <begin position="333"/>
        <end position="392"/>
    </location>
</feature>
<feature type="compositionally biased region" description="Low complexity" evidence="5">
    <location>
        <begin position="333"/>
        <end position="344"/>
    </location>
</feature>
<feature type="compositionally biased region" description="Acidic residues" evidence="5">
    <location>
        <begin position="354"/>
        <end position="364"/>
    </location>
</feature>
<feature type="compositionally biased region" description="Acidic residues" evidence="5">
    <location>
        <begin position="379"/>
        <end position="392"/>
    </location>
</feature>
<feature type="binding site" evidence="2">
    <location>
        <position position="129"/>
    </location>
    <ligand>
        <name>Zn(2+)</name>
        <dbReference type="ChEBI" id="CHEBI:29105"/>
    </ligand>
</feature>
<feature type="binding site" evidence="2">
    <location>
        <position position="132"/>
    </location>
    <ligand>
        <name>Zn(2+)</name>
        <dbReference type="ChEBI" id="CHEBI:29105"/>
    </ligand>
</feature>
<feature type="binding site" evidence="2">
    <location>
        <position position="154"/>
    </location>
    <ligand>
        <name>Zn(2+)</name>
        <dbReference type="ChEBI" id="CHEBI:29105"/>
    </ligand>
</feature>
<feature type="binding site" evidence="2">
    <location>
        <position position="157"/>
    </location>
    <ligand>
        <name>Zn(2+)</name>
        <dbReference type="ChEBI" id="CHEBI:29105"/>
    </ligand>
</feature>
<feature type="modified residue" description="N-acetylalanine" evidence="2">
    <location>
        <position position="2"/>
    </location>
</feature>
<feature type="modified residue" description="N6-acetyllysine" evidence="2">
    <location>
        <position position="67"/>
    </location>
</feature>
<feature type="modified residue" description="Phosphoserine" evidence="2">
    <location>
        <position position="268"/>
    </location>
</feature>
<gene>
    <name type="primary">GTF2E1</name>
</gene>
<evidence type="ECO:0000250" key="1"/>
<evidence type="ECO:0000250" key="2">
    <source>
        <dbReference type="UniProtKB" id="P29083"/>
    </source>
</evidence>
<evidence type="ECO:0000255" key="3"/>
<evidence type="ECO:0000255" key="4">
    <source>
        <dbReference type="PROSITE-ProRule" id="PRU00676"/>
    </source>
</evidence>
<evidence type="ECO:0000256" key="5">
    <source>
        <dbReference type="SAM" id="MobiDB-lite"/>
    </source>
</evidence>
<evidence type="ECO:0000305" key="6"/>
<dbReference type="EMBL" id="CR859777">
    <property type="protein sequence ID" value="CAH91935.1"/>
    <property type="molecule type" value="mRNA"/>
</dbReference>
<dbReference type="RefSeq" id="NP_001127483.1">
    <property type="nucleotide sequence ID" value="NM_001134011.1"/>
</dbReference>
<dbReference type="RefSeq" id="XP_063577714.1">
    <property type="nucleotide sequence ID" value="XM_063721644.1"/>
</dbReference>
<dbReference type="SMR" id="Q5R8H5"/>
<dbReference type="FunCoup" id="Q5R8H5">
    <property type="interactions" value="3880"/>
</dbReference>
<dbReference type="STRING" id="9601.ENSPPYP00000015098"/>
<dbReference type="Ensembl" id="ENSPPYT00000015701.3">
    <property type="protein sequence ID" value="ENSPPYP00000015098.2"/>
    <property type="gene ID" value="ENSPPYG00000013500.3"/>
</dbReference>
<dbReference type="GeneID" id="100174557"/>
<dbReference type="KEGG" id="pon:100174557"/>
<dbReference type="CTD" id="2960"/>
<dbReference type="eggNOG" id="KOG2593">
    <property type="taxonomic scope" value="Eukaryota"/>
</dbReference>
<dbReference type="GeneTree" id="ENSGT00390000016696"/>
<dbReference type="HOGENOM" id="CLU_051021_1_0_1"/>
<dbReference type="InParanoid" id="Q5R8H5"/>
<dbReference type="OMA" id="DAIKWKV"/>
<dbReference type="OrthoDB" id="361102at2759"/>
<dbReference type="TreeFam" id="TF313429"/>
<dbReference type="Proteomes" id="UP000001595">
    <property type="component" value="Chromosome 3"/>
</dbReference>
<dbReference type="GO" id="GO:0005829">
    <property type="term" value="C:cytosol"/>
    <property type="evidence" value="ECO:0007669"/>
    <property type="project" value="Ensembl"/>
</dbReference>
<dbReference type="GO" id="GO:0005669">
    <property type="term" value="C:transcription factor TFIID complex"/>
    <property type="evidence" value="ECO:0007669"/>
    <property type="project" value="Ensembl"/>
</dbReference>
<dbReference type="GO" id="GO:0005673">
    <property type="term" value="C:transcription factor TFIIE complex"/>
    <property type="evidence" value="ECO:0007669"/>
    <property type="project" value="TreeGrafter"/>
</dbReference>
<dbReference type="GO" id="GO:0016251">
    <property type="term" value="F:RNA polymerase II general transcription initiation factor activity"/>
    <property type="evidence" value="ECO:0007669"/>
    <property type="project" value="Ensembl"/>
</dbReference>
<dbReference type="GO" id="GO:0008270">
    <property type="term" value="F:zinc ion binding"/>
    <property type="evidence" value="ECO:0007669"/>
    <property type="project" value="UniProtKB-KW"/>
</dbReference>
<dbReference type="GO" id="GO:0006367">
    <property type="term" value="P:transcription initiation at RNA polymerase II promoter"/>
    <property type="evidence" value="ECO:0007669"/>
    <property type="project" value="InterPro"/>
</dbReference>
<dbReference type="FunFam" id="3.30.40.10:FF:000087">
    <property type="entry name" value="General transcription factor IIE subunit 1"/>
    <property type="match status" value="1"/>
</dbReference>
<dbReference type="Gene3D" id="6.10.140.1250">
    <property type="match status" value="1"/>
</dbReference>
<dbReference type="Gene3D" id="3.30.40.10">
    <property type="entry name" value="Zinc/RING finger domain, C3HC4 (zinc finger)"/>
    <property type="match status" value="1"/>
</dbReference>
<dbReference type="InterPro" id="IPR039997">
    <property type="entry name" value="TFE"/>
</dbReference>
<dbReference type="InterPro" id="IPR017919">
    <property type="entry name" value="TFIIE/TFIIEa_HTH"/>
</dbReference>
<dbReference type="InterPro" id="IPR002853">
    <property type="entry name" value="TFIIE_asu"/>
</dbReference>
<dbReference type="InterPro" id="IPR021600">
    <property type="entry name" value="TFIIE_asu_C"/>
</dbReference>
<dbReference type="InterPro" id="IPR024550">
    <property type="entry name" value="TFIIEa/SarR/Rpc3_HTH_dom"/>
</dbReference>
<dbReference type="InterPro" id="IPR013083">
    <property type="entry name" value="Znf_RING/FYVE/PHD"/>
</dbReference>
<dbReference type="InterPro" id="IPR013137">
    <property type="entry name" value="Znf_TFIIB"/>
</dbReference>
<dbReference type="PANTHER" id="PTHR13097:SF8">
    <property type="entry name" value="GENERAL TRANSCRIPTION FACTOR IIE SUBUNIT 1"/>
    <property type="match status" value="1"/>
</dbReference>
<dbReference type="PANTHER" id="PTHR13097">
    <property type="entry name" value="TRANSCRIPTION INITIATION FACTOR IIE, ALPHA SUBUNIT"/>
    <property type="match status" value="1"/>
</dbReference>
<dbReference type="Pfam" id="PF11521">
    <property type="entry name" value="TFIIE-A_C"/>
    <property type="match status" value="1"/>
</dbReference>
<dbReference type="Pfam" id="PF02002">
    <property type="entry name" value="TFIIE_alpha"/>
    <property type="match status" value="1"/>
</dbReference>
<dbReference type="Pfam" id="PF08271">
    <property type="entry name" value="Zn_Ribbon_TF"/>
    <property type="match status" value="1"/>
</dbReference>
<dbReference type="SMART" id="SM00531">
    <property type="entry name" value="TFIIE"/>
    <property type="match status" value="1"/>
</dbReference>
<dbReference type="SUPFAM" id="SSF57783">
    <property type="entry name" value="Zinc beta-ribbon"/>
    <property type="match status" value="1"/>
</dbReference>
<dbReference type="PROSITE" id="PS51344">
    <property type="entry name" value="HTH_TFE_IIE"/>
    <property type="match status" value="1"/>
</dbReference>
<protein>
    <recommendedName>
        <fullName>General transcription factor IIE subunit 1</fullName>
    </recommendedName>
    <alternativeName>
        <fullName>Transcription initiation factor IIE subunit alpha</fullName>
        <shortName>TFIIE-alpha</shortName>
    </alternativeName>
</protein>
<comment type="function">
    <text evidence="1">Recruits TFIIH to the initiation complex and stimulates the RNA polymerase II C-terminal domain kinase and DNA-dependent ATPase activities of TFIIH. Both TFIIH and TFIIE are required for promoter clearance by RNA polymerase (By similarity).</text>
</comment>
<comment type="subunit">
    <text evidence="2">Tetramer of two alpha and two beta chains. Interacts with TAF6/TAFII80. Interacts with ATF7IP. Interacts with SND1. Part of TBP-based Pol II pre-initiation complex (PIC), in which Pol II core assembles with general transcription factors and other specific initiation factors including GTF2E1, GTF2E2, GTF2F1, GTF2F2, TCEA1, ERCC2, ERCC3, GTF2H2, GTF2H3, GTF2H4, GTF2H5, GTF2A1, GTF2A2, GTF2B and TBP; this large multi-subunit PIC complex mediates DNA unwinding and targets Pol II core to the transcription start site where the first phosphodiester bond forms.</text>
</comment>
<comment type="subcellular location">
    <subcellularLocation>
        <location evidence="2">Nucleus</location>
    </subcellularLocation>
</comment>
<comment type="similarity">
    <text evidence="6">Belongs to the TFIIE alpha subunit family.</text>
</comment>
<name>T2EA_PONAB</name>
<keyword id="KW-0007">Acetylation</keyword>
<keyword id="KW-0479">Metal-binding</keyword>
<keyword id="KW-0539">Nucleus</keyword>
<keyword id="KW-0597">Phosphoprotein</keyword>
<keyword id="KW-1185">Reference proteome</keyword>
<keyword id="KW-0804">Transcription</keyword>
<keyword id="KW-0805">Transcription regulation</keyword>
<keyword id="KW-0862">Zinc</keyword>
<keyword id="KW-0863">Zinc-finger</keyword>
<sequence length="439" mass="49531">MADPDVLTEVPAALKRLAKYVIRGFYGIEHALALDILIRNPCVKEEDMLELLKFDRKQLRSVLNNLKGDKFIKCRMRVETAADGKTTRHNYYFINYRTLVNVVKYKLDHMRRRIETDERDSTNRASFKCPVCSSTFTDLEANQLFDPMTGTFRCTFCHTEVEEDESAMPKKDARTLLARFNEQIEPIYALLRETEDVNLAYEILEPEPTEIPALKQSKDHAATTAGAASLAGGHHREAWATKGPSYEDLYTQNVVINMDDHEDLHRASLEGKSAKERPIWLRESTVQGAYSSEDMKEGGIDMDAFQEHEEGRAGPDDNEEVMRALLIHEKKTSSAMAGSVGAAAPVTTANGSDSESETSESDDDSPPRPAAVAVHKREEDEEEDDEFEEVADDPIVMVAGRPFSYSEVSQRPELVAQMTPEEKEAYIAMGQRMFEDLFE</sequence>
<reference key="1">
    <citation type="submission" date="2004-11" db="EMBL/GenBank/DDBJ databases">
        <authorList>
            <consortium name="The German cDNA consortium"/>
        </authorList>
    </citation>
    <scope>NUCLEOTIDE SEQUENCE [LARGE SCALE MRNA]</scope>
    <source>
        <tissue>Heart</tissue>
    </source>
</reference>
<proteinExistence type="evidence at transcript level"/>